<proteinExistence type="inferred from homology"/>
<feature type="chain" id="PRO_0000154614" description="Large ribosomal subunit protein uL10">
    <location>
        <begin position="1"/>
        <end position="172"/>
    </location>
</feature>
<dbReference type="EMBL" id="AE001273">
    <property type="protein sequence ID" value="AAC67910.1"/>
    <property type="molecule type" value="Genomic_DNA"/>
</dbReference>
<dbReference type="PIR" id="B71530">
    <property type="entry name" value="B71530"/>
</dbReference>
<dbReference type="RefSeq" id="NP_219822.1">
    <property type="nucleotide sequence ID" value="NC_000117.1"/>
</dbReference>
<dbReference type="RefSeq" id="WP_010725158.1">
    <property type="nucleotide sequence ID" value="NC_000117.1"/>
</dbReference>
<dbReference type="SMR" id="O84319"/>
<dbReference type="FunCoup" id="O84319">
    <property type="interactions" value="283"/>
</dbReference>
<dbReference type="STRING" id="272561.CT_317"/>
<dbReference type="EnsemblBacteria" id="AAC67910">
    <property type="protein sequence ID" value="AAC67910"/>
    <property type="gene ID" value="CT_317"/>
</dbReference>
<dbReference type="GeneID" id="884806"/>
<dbReference type="KEGG" id="ctr:CT_317"/>
<dbReference type="PATRIC" id="fig|272561.5.peg.339"/>
<dbReference type="HOGENOM" id="CLU_092227_1_2_0"/>
<dbReference type="InParanoid" id="O84319"/>
<dbReference type="OrthoDB" id="18754at2"/>
<dbReference type="Proteomes" id="UP000000431">
    <property type="component" value="Chromosome"/>
</dbReference>
<dbReference type="GO" id="GO:0022625">
    <property type="term" value="C:cytosolic large ribosomal subunit"/>
    <property type="evidence" value="ECO:0000318"/>
    <property type="project" value="GO_Central"/>
</dbReference>
<dbReference type="GO" id="GO:0070180">
    <property type="term" value="F:large ribosomal subunit rRNA binding"/>
    <property type="evidence" value="ECO:0007669"/>
    <property type="project" value="UniProtKB-UniRule"/>
</dbReference>
<dbReference type="GO" id="GO:0003735">
    <property type="term" value="F:structural constituent of ribosome"/>
    <property type="evidence" value="ECO:0000318"/>
    <property type="project" value="GO_Central"/>
</dbReference>
<dbReference type="GO" id="GO:0006412">
    <property type="term" value="P:translation"/>
    <property type="evidence" value="ECO:0000318"/>
    <property type="project" value="GO_Central"/>
</dbReference>
<dbReference type="CDD" id="cd05797">
    <property type="entry name" value="Ribosomal_L10"/>
    <property type="match status" value="1"/>
</dbReference>
<dbReference type="Gene3D" id="3.30.70.1730">
    <property type="match status" value="1"/>
</dbReference>
<dbReference type="Gene3D" id="6.10.250.290">
    <property type="match status" value="1"/>
</dbReference>
<dbReference type="HAMAP" id="MF_00362">
    <property type="entry name" value="Ribosomal_uL10"/>
    <property type="match status" value="1"/>
</dbReference>
<dbReference type="InterPro" id="IPR001790">
    <property type="entry name" value="Ribosomal_uL10"/>
</dbReference>
<dbReference type="InterPro" id="IPR043141">
    <property type="entry name" value="Ribosomal_uL10-like_sf"/>
</dbReference>
<dbReference type="InterPro" id="IPR022973">
    <property type="entry name" value="Ribosomal_uL10_bac"/>
</dbReference>
<dbReference type="InterPro" id="IPR047865">
    <property type="entry name" value="Ribosomal_uL10_bac_type"/>
</dbReference>
<dbReference type="InterPro" id="IPR002363">
    <property type="entry name" value="Ribosomal_uL10_CS_bac"/>
</dbReference>
<dbReference type="NCBIfam" id="NF000955">
    <property type="entry name" value="PRK00099.1-1"/>
    <property type="match status" value="1"/>
</dbReference>
<dbReference type="PANTHER" id="PTHR11560">
    <property type="entry name" value="39S RIBOSOMAL PROTEIN L10, MITOCHONDRIAL"/>
    <property type="match status" value="1"/>
</dbReference>
<dbReference type="Pfam" id="PF00466">
    <property type="entry name" value="Ribosomal_L10"/>
    <property type="match status" value="1"/>
</dbReference>
<dbReference type="SUPFAM" id="SSF160369">
    <property type="entry name" value="Ribosomal protein L10-like"/>
    <property type="match status" value="1"/>
</dbReference>
<dbReference type="PROSITE" id="PS01109">
    <property type="entry name" value="RIBOSOMAL_L10"/>
    <property type="match status" value="1"/>
</dbReference>
<gene>
    <name type="primary">rplJ</name>
    <name type="synonym">rl10</name>
    <name type="ordered locus">CT_317</name>
</gene>
<sequence>MKEEKKLLLREVEEKITASQGFILLRYLGFTAAHSRSFRNNLSGVSAEFEVLKKKIFFKALETSGVEMDPEGGEGHLGVVFAYGDPVSAAKQVLDFNKQHNDSLVFLAGRIDNASLSGREVEAVAKLPSMKELRQQVVGLIAAPMSQVAGIMNSVLSGVISCVDQKAEKTQE</sequence>
<protein>
    <recommendedName>
        <fullName evidence="2">Large ribosomal subunit protein uL10</fullName>
    </recommendedName>
    <alternativeName>
        <fullName>50S ribosomal protein L10</fullName>
    </alternativeName>
</protein>
<accession>O84319</accession>
<name>RL10_CHLTR</name>
<organism>
    <name type="scientific">Chlamydia trachomatis serovar D (strain ATCC VR-885 / DSM 19411 / UW-3/Cx)</name>
    <dbReference type="NCBI Taxonomy" id="272561"/>
    <lineage>
        <taxon>Bacteria</taxon>
        <taxon>Pseudomonadati</taxon>
        <taxon>Chlamydiota</taxon>
        <taxon>Chlamydiia</taxon>
        <taxon>Chlamydiales</taxon>
        <taxon>Chlamydiaceae</taxon>
        <taxon>Chlamydia/Chlamydophila group</taxon>
        <taxon>Chlamydia</taxon>
    </lineage>
</organism>
<reference key="1">
    <citation type="journal article" date="1998" name="Science">
        <title>Genome sequence of an obligate intracellular pathogen of humans: Chlamydia trachomatis.</title>
        <authorList>
            <person name="Stephens R.S."/>
            <person name="Kalman S."/>
            <person name="Lammel C.J."/>
            <person name="Fan J."/>
            <person name="Marathe R."/>
            <person name="Aravind L."/>
            <person name="Mitchell W.P."/>
            <person name="Olinger L."/>
            <person name="Tatusov R.L."/>
            <person name="Zhao Q."/>
            <person name="Koonin E.V."/>
            <person name="Davis R.W."/>
        </authorList>
    </citation>
    <scope>NUCLEOTIDE SEQUENCE [LARGE SCALE GENOMIC DNA]</scope>
    <source>
        <strain>ATCC VR-885 / DSM 19411 / UW-3/Cx</strain>
    </source>
</reference>
<keyword id="KW-1185">Reference proteome</keyword>
<keyword id="KW-0687">Ribonucleoprotein</keyword>
<keyword id="KW-0689">Ribosomal protein</keyword>
<keyword id="KW-0694">RNA-binding</keyword>
<keyword id="KW-0699">rRNA-binding</keyword>
<comment type="function">
    <text evidence="1">Forms part of the ribosomal stalk, playing a central role in the interaction of the ribosome with GTP-bound translation factors.</text>
</comment>
<comment type="subunit">
    <text evidence="1">Part of the ribosomal stalk of the 50S ribosomal subunit. The N-terminus interacts with L11 and the large rRNA to form the base of the stalk. The C-terminus forms an elongated spine to which L12 dimers bind in a sequential fashion forming a multimeric L10(L12)X complex (By similarity).</text>
</comment>
<comment type="similarity">
    <text evidence="2">Belongs to the universal ribosomal protein uL10 family.</text>
</comment>
<evidence type="ECO:0000250" key="1"/>
<evidence type="ECO:0000305" key="2"/>